<proteinExistence type="inferred from homology"/>
<accession>A7Z9Q9</accession>
<feature type="chain" id="PRO_1000006220" description="Serine hydroxymethyltransferase">
    <location>
        <begin position="1"/>
        <end position="415"/>
    </location>
</feature>
<feature type="binding site" evidence="1">
    <location>
        <position position="117"/>
    </location>
    <ligand>
        <name>(6S)-5,6,7,8-tetrahydrofolate</name>
        <dbReference type="ChEBI" id="CHEBI:57453"/>
    </ligand>
</feature>
<feature type="binding site" evidence="1">
    <location>
        <begin position="121"/>
        <end position="123"/>
    </location>
    <ligand>
        <name>(6S)-5,6,7,8-tetrahydrofolate</name>
        <dbReference type="ChEBI" id="CHEBI:57453"/>
    </ligand>
</feature>
<feature type="binding site" evidence="1">
    <location>
        <position position="241"/>
    </location>
    <ligand>
        <name>(6S)-5,6,7,8-tetrahydrofolate</name>
        <dbReference type="ChEBI" id="CHEBI:57453"/>
    </ligand>
</feature>
<feature type="site" description="Plays an important role in substrate specificity" evidence="1">
    <location>
        <position position="225"/>
    </location>
</feature>
<feature type="modified residue" description="N6-(pyridoxal phosphate)lysine" evidence="1">
    <location>
        <position position="226"/>
    </location>
</feature>
<comment type="function">
    <text evidence="1">Catalyzes the reversible interconversion of serine and glycine with tetrahydrofolate (THF) serving as the one-carbon carrier. This reaction serves as the major source of one-carbon groups required for the biosynthesis of purines, thymidylate, methionine, and other important biomolecules. Also exhibits THF-independent aldolase activity toward beta-hydroxyamino acids, producing glycine and aldehydes, via a retro-aldol mechanism.</text>
</comment>
<comment type="catalytic activity">
    <reaction evidence="1">
        <text>(6R)-5,10-methylene-5,6,7,8-tetrahydrofolate + glycine + H2O = (6S)-5,6,7,8-tetrahydrofolate + L-serine</text>
        <dbReference type="Rhea" id="RHEA:15481"/>
        <dbReference type="ChEBI" id="CHEBI:15377"/>
        <dbReference type="ChEBI" id="CHEBI:15636"/>
        <dbReference type="ChEBI" id="CHEBI:33384"/>
        <dbReference type="ChEBI" id="CHEBI:57305"/>
        <dbReference type="ChEBI" id="CHEBI:57453"/>
        <dbReference type="EC" id="2.1.2.1"/>
    </reaction>
</comment>
<comment type="cofactor">
    <cofactor evidence="1">
        <name>pyridoxal 5'-phosphate</name>
        <dbReference type="ChEBI" id="CHEBI:597326"/>
    </cofactor>
</comment>
<comment type="pathway">
    <text evidence="1">One-carbon metabolism; tetrahydrofolate interconversion.</text>
</comment>
<comment type="pathway">
    <text evidence="1">Amino-acid biosynthesis; glycine biosynthesis; glycine from L-serine: step 1/1.</text>
</comment>
<comment type="subunit">
    <text evidence="1">Homodimer.</text>
</comment>
<comment type="subcellular location">
    <subcellularLocation>
        <location evidence="1">Cytoplasm</location>
    </subcellularLocation>
</comment>
<comment type="similarity">
    <text evidence="1">Belongs to the SHMT family.</text>
</comment>
<gene>
    <name evidence="1" type="primary">glyA</name>
    <name type="ordered locus">RBAM_034060</name>
</gene>
<reference key="1">
    <citation type="journal article" date="2007" name="Nat. Biotechnol.">
        <title>Comparative analysis of the complete genome sequence of the plant growth-promoting bacterium Bacillus amyloliquefaciens FZB42.</title>
        <authorList>
            <person name="Chen X.H."/>
            <person name="Koumoutsi A."/>
            <person name="Scholz R."/>
            <person name="Eisenreich A."/>
            <person name="Schneider K."/>
            <person name="Heinemeyer I."/>
            <person name="Morgenstern B."/>
            <person name="Voss B."/>
            <person name="Hess W.R."/>
            <person name="Reva O."/>
            <person name="Junge H."/>
            <person name="Voigt B."/>
            <person name="Jungblut P.R."/>
            <person name="Vater J."/>
            <person name="Suessmuth R."/>
            <person name="Liesegang H."/>
            <person name="Strittmatter A."/>
            <person name="Gottschalk G."/>
            <person name="Borriss R."/>
        </authorList>
    </citation>
    <scope>NUCLEOTIDE SEQUENCE [LARGE SCALE GENOMIC DNA]</scope>
    <source>
        <strain>DSM 23117 / BGSC 10A6 / LMG 26770 / FZB42</strain>
    </source>
</reference>
<protein>
    <recommendedName>
        <fullName evidence="1">Serine hydroxymethyltransferase</fullName>
        <shortName evidence="1">SHMT</shortName>
        <shortName evidence="1">Serine methylase</shortName>
        <ecNumber evidence="1">2.1.2.1</ecNumber>
    </recommendedName>
</protein>
<organism>
    <name type="scientific">Bacillus velezensis (strain DSM 23117 / BGSC 10A6 / LMG 26770 / FZB42)</name>
    <name type="common">Bacillus amyloliquefaciens subsp. plantarum</name>
    <dbReference type="NCBI Taxonomy" id="326423"/>
    <lineage>
        <taxon>Bacteria</taxon>
        <taxon>Bacillati</taxon>
        <taxon>Bacillota</taxon>
        <taxon>Bacilli</taxon>
        <taxon>Bacillales</taxon>
        <taxon>Bacillaceae</taxon>
        <taxon>Bacillus</taxon>
        <taxon>Bacillus amyloliquefaciens group</taxon>
    </lineage>
</organism>
<dbReference type="EC" id="2.1.2.1" evidence="1"/>
<dbReference type="EMBL" id="CP000560">
    <property type="protein sequence ID" value="ABS75735.1"/>
    <property type="molecule type" value="Genomic_DNA"/>
</dbReference>
<dbReference type="RefSeq" id="WP_012118660.1">
    <property type="nucleotide sequence ID" value="NC_009725.2"/>
</dbReference>
<dbReference type="SMR" id="A7Z9Q9"/>
<dbReference type="GeneID" id="93082550"/>
<dbReference type="KEGG" id="bay:RBAM_034060"/>
<dbReference type="HOGENOM" id="CLU_022477_2_1_9"/>
<dbReference type="UniPathway" id="UPA00193"/>
<dbReference type="UniPathway" id="UPA00288">
    <property type="reaction ID" value="UER01023"/>
</dbReference>
<dbReference type="Proteomes" id="UP000001120">
    <property type="component" value="Chromosome"/>
</dbReference>
<dbReference type="GO" id="GO:0005829">
    <property type="term" value="C:cytosol"/>
    <property type="evidence" value="ECO:0007669"/>
    <property type="project" value="TreeGrafter"/>
</dbReference>
<dbReference type="GO" id="GO:0004372">
    <property type="term" value="F:glycine hydroxymethyltransferase activity"/>
    <property type="evidence" value="ECO:0007669"/>
    <property type="project" value="UniProtKB-UniRule"/>
</dbReference>
<dbReference type="GO" id="GO:0030170">
    <property type="term" value="F:pyridoxal phosphate binding"/>
    <property type="evidence" value="ECO:0007669"/>
    <property type="project" value="UniProtKB-UniRule"/>
</dbReference>
<dbReference type="GO" id="GO:0019264">
    <property type="term" value="P:glycine biosynthetic process from serine"/>
    <property type="evidence" value="ECO:0007669"/>
    <property type="project" value="UniProtKB-UniRule"/>
</dbReference>
<dbReference type="GO" id="GO:0035999">
    <property type="term" value="P:tetrahydrofolate interconversion"/>
    <property type="evidence" value="ECO:0007669"/>
    <property type="project" value="UniProtKB-UniRule"/>
</dbReference>
<dbReference type="CDD" id="cd00378">
    <property type="entry name" value="SHMT"/>
    <property type="match status" value="1"/>
</dbReference>
<dbReference type="FunFam" id="3.40.640.10:FF:000001">
    <property type="entry name" value="Serine hydroxymethyltransferase"/>
    <property type="match status" value="1"/>
</dbReference>
<dbReference type="FunFam" id="3.90.1150.10:FF:000003">
    <property type="entry name" value="Serine hydroxymethyltransferase"/>
    <property type="match status" value="1"/>
</dbReference>
<dbReference type="Gene3D" id="3.90.1150.10">
    <property type="entry name" value="Aspartate Aminotransferase, domain 1"/>
    <property type="match status" value="1"/>
</dbReference>
<dbReference type="Gene3D" id="3.40.640.10">
    <property type="entry name" value="Type I PLP-dependent aspartate aminotransferase-like (Major domain)"/>
    <property type="match status" value="1"/>
</dbReference>
<dbReference type="HAMAP" id="MF_00051">
    <property type="entry name" value="SHMT"/>
    <property type="match status" value="1"/>
</dbReference>
<dbReference type="InterPro" id="IPR015424">
    <property type="entry name" value="PyrdxlP-dep_Trfase"/>
</dbReference>
<dbReference type="InterPro" id="IPR015421">
    <property type="entry name" value="PyrdxlP-dep_Trfase_major"/>
</dbReference>
<dbReference type="InterPro" id="IPR015422">
    <property type="entry name" value="PyrdxlP-dep_Trfase_small"/>
</dbReference>
<dbReference type="InterPro" id="IPR001085">
    <property type="entry name" value="Ser_HO-MeTrfase"/>
</dbReference>
<dbReference type="InterPro" id="IPR049943">
    <property type="entry name" value="Ser_HO-MeTrfase-like"/>
</dbReference>
<dbReference type="InterPro" id="IPR019798">
    <property type="entry name" value="Ser_HO-MeTrfase_PLP_BS"/>
</dbReference>
<dbReference type="InterPro" id="IPR039429">
    <property type="entry name" value="SHMT-like_dom"/>
</dbReference>
<dbReference type="NCBIfam" id="NF000586">
    <property type="entry name" value="PRK00011.1"/>
    <property type="match status" value="1"/>
</dbReference>
<dbReference type="PANTHER" id="PTHR11680">
    <property type="entry name" value="SERINE HYDROXYMETHYLTRANSFERASE"/>
    <property type="match status" value="1"/>
</dbReference>
<dbReference type="PANTHER" id="PTHR11680:SF35">
    <property type="entry name" value="SERINE HYDROXYMETHYLTRANSFERASE 1"/>
    <property type="match status" value="1"/>
</dbReference>
<dbReference type="Pfam" id="PF00464">
    <property type="entry name" value="SHMT"/>
    <property type="match status" value="1"/>
</dbReference>
<dbReference type="PIRSF" id="PIRSF000412">
    <property type="entry name" value="SHMT"/>
    <property type="match status" value="1"/>
</dbReference>
<dbReference type="SUPFAM" id="SSF53383">
    <property type="entry name" value="PLP-dependent transferases"/>
    <property type="match status" value="1"/>
</dbReference>
<dbReference type="PROSITE" id="PS00096">
    <property type="entry name" value="SHMT"/>
    <property type="match status" value="1"/>
</dbReference>
<sequence length="415" mass="45482">MKHLPVQDKQVFNAIKDERKRQQTKIELIASENFVTEAVMEAQGSVLTNKYAEGYPGKRYYGGCEHVDVVEDIARDRAKEIFGAEHVNVQPHSGAQANMAVYFTILEHGDTVLGMNLSHGGHLTHGSPVNFSGVQYNFVEYGVDKDTQYIDYEDVREKALAHKPKLIVAGASAYPRTIDFKKFREIADEVGAYFMVDMAHIAGLVAAGLHPNPVPYADFVTTTTHKTLRGPRGGMILCREEFGKKIDKSIFPGIQGGPLMHVIAAKAVSFGEVLEDDFKTYAQNVISNAKSLAESLNKEGIQLVSGGTDNHLVLVDLRSLGLTGKVAEHVLDEIGITSNKNAIPYDPEKPFVTSGIRLGTAAVTSRGFDGDALEEVGAIIGLALKHHEDEAKLEEARQRVSALTEKFPLYKELGY</sequence>
<name>GLYA_BACVZ</name>
<evidence type="ECO:0000255" key="1">
    <source>
        <dbReference type="HAMAP-Rule" id="MF_00051"/>
    </source>
</evidence>
<keyword id="KW-0028">Amino-acid biosynthesis</keyword>
<keyword id="KW-0963">Cytoplasm</keyword>
<keyword id="KW-0554">One-carbon metabolism</keyword>
<keyword id="KW-0663">Pyridoxal phosphate</keyword>
<keyword id="KW-0808">Transferase</keyword>